<evidence type="ECO:0000255" key="1">
    <source>
        <dbReference type="HAMAP-Rule" id="MF_00218"/>
    </source>
</evidence>
<protein>
    <recommendedName>
        <fullName evidence="1">Uroporphyrinogen decarboxylase</fullName>
        <shortName evidence="1">UPD</shortName>
        <shortName evidence="1">URO-D</shortName>
        <ecNumber evidence="1">4.1.1.37</ecNumber>
    </recommendedName>
</protein>
<comment type="function">
    <text evidence="1">Catalyzes the decarboxylation of four acetate groups of uroporphyrinogen-III to yield coproporphyrinogen-III.</text>
</comment>
<comment type="catalytic activity">
    <reaction evidence="1">
        <text>uroporphyrinogen III + 4 H(+) = coproporphyrinogen III + 4 CO2</text>
        <dbReference type="Rhea" id="RHEA:19865"/>
        <dbReference type="ChEBI" id="CHEBI:15378"/>
        <dbReference type="ChEBI" id="CHEBI:16526"/>
        <dbReference type="ChEBI" id="CHEBI:57308"/>
        <dbReference type="ChEBI" id="CHEBI:57309"/>
        <dbReference type="EC" id="4.1.1.37"/>
    </reaction>
</comment>
<comment type="pathway">
    <text evidence="1">Porphyrin-containing compound metabolism; protoporphyrin-IX biosynthesis; coproporphyrinogen-III from 5-aminolevulinate: step 4/4.</text>
</comment>
<comment type="subunit">
    <text evidence="1">Homodimer.</text>
</comment>
<comment type="subcellular location">
    <subcellularLocation>
        <location evidence="1">Cytoplasm</location>
    </subcellularLocation>
</comment>
<comment type="similarity">
    <text evidence="1">Belongs to the uroporphyrinogen decarboxylase family.</text>
</comment>
<dbReference type="EC" id="4.1.1.37" evidence="1"/>
<dbReference type="EMBL" id="CP000409">
    <property type="protein sequence ID" value="ABV74046.1"/>
    <property type="molecule type" value="Genomic_DNA"/>
</dbReference>
<dbReference type="RefSeq" id="WP_012149240.1">
    <property type="nucleotide sequence ID" value="NC_009879.1"/>
</dbReference>
<dbReference type="SMR" id="A8F0B3"/>
<dbReference type="STRING" id="293613.A1E_05675"/>
<dbReference type="KEGG" id="rcm:A1E_05675"/>
<dbReference type="eggNOG" id="COG0407">
    <property type="taxonomic scope" value="Bacteria"/>
</dbReference>
<dbReference type="HOGENOM" id="CLU_040933_0_0_5"/>
<dbReference type="UniPathway" id="UPA00251">
    <property type="reaction ID" value="UER00321"/>
</dbReference>
<dbReference type="Proteomes" id="UP000007056">
    <property type="component" value="Chromosome"/>
</dbReference>
<dbReference type="GO" id="GO:0005829">
    <property type="term" value="C:cytosol"/>
    <property type="evidence" value="ECO:0007669"/>
    <property type="project" value="TreeGrafter"/>
</dbReference>
<dbReference type="GO" id="GO:0004853">
    <property type="term" value="F:uroporphyrinogen decarboxylase activity"/>
    <property type="evidence" value="ECO:0007669"/>
    <property type="project" value="UniProtKB-UniRule"/>
</dbReference>
<dbReference type="GO" id="GO:0006782">
    <property type="term" value="P:protoporphyrinogen IX biosynthetic process"/>
    <property type="evidence" value="ECO:0007669"/>
    <property type="project" value="UniProtKB-UniRule"/>
</dbReference>
<dbReference type="CDD" id="cd00717">
    <property type="entry name" value="URO-D"/>
    <property type="match status" value="1"/>
</dbReference>
<dbReference type="FunFam" id="3.20.20.210:FF:000007">
    <property type="entry name" value="Uroporphyrinogen decarboxylase"/>
    <property type="match status" value="1"/>
</dbReference>
<dbReference type="Gene3D" id="3.20.20.210">
    <property type="match status" value="1"/>
</dbReference>
<dbReference type="HAMAP" id="MF_00218">
    <property type="entry name" value="URO_D"/>
    <property type="match status" value="1"/>
</dbReference>
<dbReference type="InterPro" id="IPR038071">
    <property type="entry name" value="UROD/MetE-like_sf"/>
</dbReference>
<dbReference type="InterPro" id="IPR006361">
    <property type="entry name" value="Uroporphyrinogen_deCO2ase_HemE"/>
</dbReference>
<dbReference type="InterPro" id="IPR000257">
    <property type="entry name" value="Uroporphyrinogen_deCOase"/>
</dbReference>
<dbReference type="NCBIfam" id="TIGR01464">
    <property type="entry name" value="hemE"/>
    <property type="match status" value="1"/>
</dbReference>
<dbReference type="PANTHER" id="PTHR21091">
    <property type="entry name" value="METHYLTETRAHYDROFOLATE:HOMOCYSTEINE METHYLTRANSFERASE RELATED"/>
    <property type="match status" value="1"/>
</dbReference>
<dbReference type="PANTHER" id="PTHR21091:SF169">
    <property type="entry name" value="UROPORPHYRINOGEN DECARBOXYLASE"/>
    <property type="match status" value="1"/>
</dbReference>
<dbReference type="Pfam" id="PF01208">
    <property type="entry name" value="URO-D"/>
    <property type="match status" value="1"/>
</dbReference>
<dbReference type="SUPFAM" id="SSF51726">
    <property type="entry name" value="UROD/MetE-like"/>
    <property type="match status" value="1"/>
</dbReference>
<dbReference type="PROSITE" id="PS00906">
    <property type="entry name" value="UROD_1"/>
    <property type="match status" value="1"/>
</dbReference>
<dbReference type="PROSITE" id="PS00907">
    <property type="entry name" value="UROD_2"/>
    <property type="match status" value="1"/>
</dbReference>
<organism>
    <name type="scientific">Rickettsia canadensis (strain McKiel)</name>
    <dbReference type="NCBI Taxonomy" id="293613"/>
    <lineage>
        <taxon>Bacteria</taxon>
        <taxon>Pseudomonadati</taxon>
        <taxon>Pseudomonadota</taxon>
        <taxon>Alphaproteobacteria</taxon>
        <taxon>Rickettsiales</taxon>
        <taxon>Rickettsiaceae</taxon>
        <taxon>Rickettsieae</taxon>
        <taxon>Rickettsia</taxon>
        <taxon>belli group</taxon>
    </lineage>
</organism>
<feature type="chain" id="PRO_1000023961" description="Uroporphyrinogen decarboxylase">
    <location>
        <begin position="1"/>
        <end position="339"/>
    </location>
</feature>
<feature type="binding site" evidence="1">
    <location>
        <begin position="21"/>
        <end position="25"/>
    </location>
    <ligand>
        <name>substrate</name>
    </ligand>
</feature>
<feature type="binding site" evidence="1">
    <location>
        <position position="71"/>
    </location>
    <ligand>
        <name>substrate</name>
    </ligand>
</feature>
<feature type="binding site" evidence="1">
    <location>
        <position position="146"/>
    </location>
    <ligand>
        <name>substrate</name>
    </ligand>
</feature>
<feature type="binding site" evidence="1">
    <location>
        <position position="201"/>
    </location>
    <ligand>
        <name>substrate</name>
    </ligand>
</feature>
<feature type="binding site" evidence="1">
    <location>
        <position position="316"/>
    </location>
    <ligand>
        <name>substrate</name>
    </ligand>
</feature>
<feature type="site" description="Transition state stabilizer" evidence="1">
    <location>
        <position position="71"/>
    </location>
</feature>
<proteinExistence type="inferred from homology"/>
<sequence>MKQLLNPLKGNSDKIPVWFMRQAGRYLPEYKKIRETIKNFLDFCYDVNKATEVTLQPIRRYHFDAAIIFSDILVLPHALGWEVDFKENIGPILRQFRSQEDFKYLQSDTNNKLEKVYKIIKKVKKELPSTTSLIGFAGSPWTVMSYMLEGKGKQDFKTSKKFVYENKALSKELLNFLIDKTTYHLINQVESGANILKLFDSCSGVLAEEEFTEFVIEPTKKIILKVKEVLPKTPIIAFPKGAGLLYEKFIKEVPIDILAVDQMIPLEKMKEWSDKVIVQGNLDPVVLLTNKEIIKEKAYEILQVMEGKNFIFNLGHGILPETPIENVEFLTEYVRSFKK</sequence>
<name>DCUP_RICCK</name>
<accession>A8F0B3</accession>
<reference key="1">
    <citation type="submission" date="2007-09" db="EMBL/GenBank/DDBJ databases">
        <title>Complete genome sequence of Rickettsia canadensis.</title>
        <authorList>
            <person name="Madan A."/>
            <person name="Fahey J."/>
            <person name="Helton E."/>
            <person name="Ketteman M."/>
            <person name="Madan A."/>
            <person name="Rodrigues S."/>
            <person name="Sanchez A."/>
            <person name="Whiting M."/>
            <person name="Dasch G."/>
            <person name="Eremeeva M."/>
        </authorList>
    </citation>
    <scope>NUCLEOTIDE SEQUENCE [LARGE SCALE GENOMIC DNA]</scope>
    <source>
        <strain>McKiel</strain>
    </source>
</reference>
<gene>
    <name evidence="1" type="primary">hemE</name>
    <name type="ordered locus">A1E_05675</name>
</gene>
<keyword id="KW-0963">Cytoplasm</keyword>
<keyword id="KW-0210">Decarboxylase</keyword>
<keyword id="KW-0456">Lyase</keyword>
<keyword id="KW-0627">Porphyrin biosynthesis</keyword>